<organism>
    <name type="scientific">Pseudomonas syringae pv. tomato (strain ATCC BAA-871 / DC3000)</name>
    <dbReference type="NCBI Taxonomy" id="223283"/>
    <lineage>
        <taxon>Bacteria</taxon>
        <taxon>Pseudomonadati</taxon>
        <taxon>Pseudomonadota</taxon>
        <taxon>Gammaproteobacteria</taxon>
        <taxon>Pseudomonadales</taxon>
        <taxon>Pseudomonadaceae</taxon>
        <taxon>Pseudomonas</taxon>
    </lineage>
</organism>
<evidence type="ECO:0000255" key="1">
    <source>
        <dbReference type="HAMAP-Rule" id="MF_00167"/>
    </source>
</evidence>
<accession>Q886F0</accession>
<sequence>MLVLTRDIGETFSIGDDITVQILGVNGNQVRLGISAPKDIKVHRAEVYKRIANKLSQQAAQTQP</sequence>
<proteinExistence type="inferred from homology"/>
<keyword id="KW-0010">Activator</keyword>
<keyword id="KW-0963">Cytoplasm</keyword>
<keyword id="KW-1185">Reference proteome</keyword>
<keyword id="KW-0678">Repressor</keyword>
<keyword id="KW-0694">RNA-binding</keyword>
<keyword id="KW-0810">Translation regulation</keyword>
<gene>
    <name evidence="1" type="primary">csrA1</name>
    <name type="synonym">csrA-1</name>
    <name type="ordered locus">PSPTO_1629</name>
</gene>
<comment type="function">
    <text evidence="1">A key translational regulator that binds mRNA to regulate translation initiation and/or mRNA stability. Mediates global changes in gene expression, shifting from rapid growth to stress survival by linking envelope stress, the stringent response and the catabolite repression systems. Usually binds in the 5'-UTR; binding at or near the Shine-Dalgarno sequence prevents ribosome-binding, repressing translation, binding elsewhere in the 5'-UTR can activate translation and/or stabilize the mRNA. Its function is antagonized by small RNA(s).</text>
</comment>
<comment type="subunit">
    <text evidence="1">Homodimer; the beta-strands of each monomer intercalate to form a hydrophobic core, while the alpha-helices form wings that extend away from the core.</text>
</comment>
<comment type="subcellular location">
    <subcellularLocation>
        <location evidence="1">Cytoplasm</location>
    </subcellularLocation>
</comment>
<comment type="similarity">
    <text evidence="1">Belongs to the CsrA/RsmA family.</text>
</comment>
<protein>
    <recommendedName>
        <fullName evidence="1">Translational regulator CsrA 1</fullName>
    </recommendedName>
    <alternativeName>
        <fullName evidence="1">Carbon storage regulator 1</fullName>
    </alternativeName>
</protein>
<dbReference type="EMBL" id="AE016853">
    <property type="protein sequence ID" value="AAO55149.1"/>
    <property type="molecule type" value="Genomic_DNA"/>
</dbReference>
<dbReference type="RefSeq" id="NP_791454.1">
    <property type="nucleotide sequence ID" value="NC_004578.1"/>
</dbReference>
<dbReference type="SMR" id="Q886F0"/>
<dbReference type="STRING" id="223283.PSPTO_1629"/>
<dbReference type="KEGG" id="pst:PSPTO_1629"/>
<dbReference type="PATRIC" id="fig|223283.9.peg.1653"/>
<dbReference type="eggNOG" id="COG1551">
    <property type="taxonomic scope" value="Bacteria"/>
</dbReference>
<dbReference type="HOGENOM" id="CLU_164837_2_1_6"/>
<dbReference type="OrthoDB" id="9809061at2"/>
<dbReference type="PhylomeDB" id="Q886F0"/>
<dbReference type="Proteomes" id="UP000002515">
    <property type="component" value="Chromosome"/>
</dbReference>
<dbReference type="GO" id="GO:0005829">
    <property type="term" value="C:cytosol"/>
    <property type="evidence" value="ECO:0007669"/>
    <property type="project" value="TreeGrafter"/>
</dbReference>
<dbReference type="GO" id="GO:0048027">
    <property type="term" value="F:mRNA 5'-UTR binding"/>
    <property type="evidence" value="ECO:0007669"/>
    <property type="project" value="UniProtKB-UniRule"/>
</dbReference>
<dbReference type="GO" id="GO:0006402">
    <property type="term" value="P:mRNA catabolic process"/>
    <property type="evidence" value="ECO:0007669"/>
    <property type="project" value="InterPro"/>
</dbReference>
<dbReference type="GO" id="GO:0045947">
    <property type="term" value="P:negative regulation of translational initiation"/>
    <property type="evidence" value="ECO:0007669"/>
    <property type="project" value="UniProtKB-UniRule"/>
</dbReference>
<dbReference type="GO" id="GO:0045948">
    <property type="term" value="P:positive regulation of translational initiation"/>
    <property type="evidence" value="ECO:0007669"/>
    <property type="project" value="UniProtKB-UniRule"/>
</dbReference>
<dbReference type="GO" id="GO:0006109">
    <property type="term" value="P:regulation of carbohydrate metabolic process"/>
    <property type="evidence" value="ECO:0007669"/>
    <property type="project" value="UniProtKB-UniRule"/>
</dbReference>
<dbReference type="FunFam" id="2.60.40.4380:FF:000002">
    <property type="entry name" value="Translational regulator CsrA"/>
    <property type="match status" value="1"/>
</dbReference>
<dbReference type="Gene3D" id="2.60.40.4380">
    <property type="entry name" value="Translational regulator CsrA"/>
    <property type="match status" value="1"/>
</dbReference>
<dbReference type="HAMAP" id="MF_00167">
    <property type="entry name" value="CsrA"/>
    <property type="match status" value="1"/>
</dbReference>
<dbReference type="InterPro" id="IPR003751">
    <property type="entry name" value="CsrA"/>
</dbReference>
<dbReference type="InterPro" id="IPR036107">
    <property type="entry name" value="CsrA_sf"/>
</dbReference>
<dbReference type="NCBIfam" id="TIGR00202">
    <property type="entry name" value="csrA"/>
    <property type="match status" value="1"/>
</dbReference>
<dbReference type="NCBIfam" id="NF002469">
    <property type="entry name" value="PRK01712.1"/>
    <property type="match status" value="1"/>
</dbReference>
<dbReference type="PANTHER" id="PTHR34984">
    <property type="entry name" value="CARBON STORAGE REGULATOR"/>
    <property type="match status" value="1"/>
</dbReference>
<dbReference type="PANTHER" id="PTHR34984:SF1">
    <property type="entry name" value="CARBON STORAGE REGULATOR"/>
    <property type="match status" value="1"/>
</dbReference>
<dbReference type="Pfam" id="PF02599">
    <property type="entry name" value="CsrA"/>
    <property type="match status" value="1"/>
</dbReference>
<dbReference type="SUPFAM" id="SSF117130">
    <property type="entry name" value="CsrA-like"/>
    <property type="match status" value="1"/>
</dbReference>
<reference key="1">
    <citation type="journal article" date="2003" name="Proc. Natl. Acad. Sci. U.S.A.">
        <title>The complete genome sequence of the Arabidopsis and tomato pathogen Pseudomonas syringae pv. tomato DC3000.</title>
        <authorList>
            <person name="Buell C.R."/>
            <person name="Joardar V."/>
            <person name="Lindeberg M."/>
            <person name="Selengut J."/>
            <person name="Paulsen I.T."/>
            <person name="Gwinn M.L."/>
            <person name="Dodson R.J."/>
            <person name="DeBoy R.T."/>
            <person name="Durkin A.S."/>
            <person name="Kolonay J.F."/>
            <person name="Madupu R."/>
            <person name="Daugherty S.C."/>
            <person name="Brinkac L.M."/>
            <person name="Beanan M.J."/>
            <person name="Haft D.H."/>
            <person name="Nelson W.C."/>
            <person name="Davidsen T.M."/>
            <person name="Zafar N."/>
            <person name="Zhou L."/>
            <person name="Liu J."/>
            <person name="Yuan Q."/>
            <person name="Khouri H.M."/>
            <person name="Fedorova N.B."/>
            <person name="Tran B."/>
            <person name="Russell D."/>
            <person name="Berry K.J."/>
            <person name="Utterback T.R."/>
            <person name="Van Aken S.E."/>
            <person name="Feldblyum T.V."/>
            <person name="D'Ascenzo M."/>
            <person name="Deng W.-L."/>
            <person name="Ramos A.R."/>
            <person name="Alfano J.R."/>
            <person name="Cartinhour S."/>
            <person name="Chatterjee A.K."/>
            <person name="Delaney T.P."/>
            <person name="Lazarowitz S.G."/>
            <person name="Martin G.B."/>
            <person name="Schneider D.J."/>
            <person name="Tang X."/>
            <person name="Bender C.L."/>
            <person name="White O."/>
            <person name="Fraser C.M."/>
            <person name="Collmer A."/>
        </authorList>
    </citation>
    <scope>NUCLEOTIDE SEQUENCE [LARGE SCALE GENOMIC DNA]</scope>
    <source>
        <strain>ATCC BAA-871 / DC3000</strain>
    </source>
</reference>
<feature type="chain" id="PRO_0000177083" description="Translational regulator CsrA 1">
    <location>
        <begin position="1"/>
        <end position="64"/>
    </location>
</feature>
<name>CSRA1_PSESM</name>